<gene>
    <name evidence="1" type="primary">rpsJ</name>
    <name type="ordered locus">YPA_3264</name>
</gene>
<dbReference type="EMBL" id="CP000308">
    <property type="protein sequence ID" value="ABG15226.1"/>
    <property type="molecule type" value="Genomic_DNA"/>
</dbReference>
<dbReference type="RefSeq" id="WP_001181005.1">
    <property type="nucleotide sequence ID" value="NZ_CP009906.1"/>
</dbReference>
<dbReference type="SMR" id="Q1C2U6"/>
<dbReference type="GeneID" id="98390443"/>
<dbReference type="KEGG" id="ypa:YPA_3264"/>
<dbReference type="Proteomes" id="UP000001971">
    <property type="component" value="Chromosome"/>
</dbReference>
<dbReference type="GO" id="GO:1990904">
    <property type="term" value="C:ribonucleoprotein complex"/>
    <property type="evidence" value="ECO:0007669"/>
    <property type="project" value="UniProtKB-KW"/>
</dbReference>
<dbReference type="GO" id="GO:0005840">
    <property type="term" value="C:ribosome"/>
    <property type="evidence" value="ECO:0007669"/>
    <property type="project" value="UniProtKB-KW"/>
</dbReference>
<dbReference type="GO" id="GO:0003735">
    <property type="term" value="F:structural constituent of ribosome"/>
    <property type="evidence" value="ECO:0007669"/>
    <property type="project" value="InterPro"/>
</dbReference>
<dbReference type="GO" id="GO:0000049">
    <property type="term" value="F:tRNA binding"/>
    <property type="evidence" value="ECO:0007669"/>
    <property type="project" value="UniProtKB-UniRule"/>
</dbReference>
<dbReference type="GO" id="GO:0006412">
    <property type="term" value="P:translation"/>
    <property type="evidence" value="ECO:0007669"/>
    <property type="project" value="UniProtKB-UniRule"/>
</dbReference>
<dbReference type="FunFam" id="3.30.70.600:FF:000001">
    <property type="entry name" value="30S ribosomal protein S10"/>
    <property type="match status" value="1"/>
</dbReference>
<dbReference type="Gene3D" id="3.30.70.600">
    <property type="entry name" value="Ribosomal protein S10 domain"/>
    <property type="match status" value="1"/>
</dbReference>
<dbReference type="HAMAP" id="MF_00508">
    <property type="entry name" value="Ribosomal_uS10"/>
    <property type="match status" value="1"/>
</dbReference>
<dbReference type="InterPro" id="IPR001848">
    <property type="entry name" value="Ribosomal_uS10"/>
</dbReference>
<dbReference type="InterPro" id="IPR018268">
    <property type="entry name" value="Ribosomal_uS10_CS"/>
</dbReference>
<dbReference type="InterPro" id="IPR027486">
    <property type="entry name" value="Ribosomal_uS10_dom"/>
</dbReference>
<dbReference type="InterPro" id="IPR036838">
    <property type="entry name" value="Ribosomal_uS10_dom_sf"/>
</dbReference>
<dbReference type="NCBIfam" id="NF001861">
    <property type="entry name" value="PRK00596.1"/>
    <property type="match status" value="1"/>
</dbReference>
<dbReference type="NCBIfam" id="TIGR01049">
    <property type="entry name" value="rpsJ_bact"/>
    <property type="match status" value="1"/>
</dbReference>
<dbReference type="PANTHER" id="PTHR11700">
    <property type="entry name" value="30S RIBOSOMAL PROTEIN S10 FAMILY MEMBER"/>
    <property type="match status" value="1"/>
</dbReference>
<dbReference type="Pfam" id="PF00338">
    <property type="entry name" value="Ribosomal_S10"/>
    <property type="match status" value="1"/>
</dbReference>
<dbReference type="PRINTS" id="PR00971">
    <property type="entry name" value="RIBOSOMALS10"/>
</dbReference>
<dbReference type="SMART" id="SM01403">
    <property type="entry name" value="Ribosomal_S10"/>
    <property type="match status" value="1"/>
</dbReference>
<dbReference type="SUPFAM" id="SSF54999">
    <property type="entry name" value="Ribosomal protein S10"/>
    <property type="match status" value="1"/>
</dbReference>
<dbReference type="PROSITE" id="PS00361">
    <property type="entry name" value="RIBOSOMAL_S10"/>
    <property type="match status" value="1"/>
</dbReference>
<sequence>MQNQRIRIRLKAFDHRLIDQSTAEIVETAKRTGAQVRGPIPLPTRKERFTVLISPHVNKDARDQYEIRTHKRLVDIVEPTEKTVDALMRLDLAAGVDVQISLG</sequence>
<reference key="1">
    <citation type="journal article" date="2006" name="J. Bacteriol.">
        <title>Complete genome sequence of Yersinia pestis strains Antiqua and Nepal516: evidence of gene reduction in an emerging pathogen.</title>
        <authorList>
            <person name="Chain P.S.G."/>
            <person name="Hu P."/>
            <person name="Malfatti S.A."/>
            <person name="Radnedge L."/>
            <person name="Larimer F."/>
            <person name="Vergez L.M."/>
            <person name="Worsham P."/>
            <person name="Chu M.C."/>
            <person name="Andersen G.L."/>
        </authorList>
    </citation>
    <scope>NUCLEOTIDE SEQUENCE [LARGE SCALE GENOMIC DNA]</scope>
    <source>
        <strain>Antiqua</strain>
    </source>
</reference>
<feature type="chain" id="PRO_0000258579" description="Small ribosomal subunit protein uS10">
    <location>
        <begin position="1"/>
        <end position="103"/>
    </location>
</feature>
<organism>
    <name type="scientific">Yersinia pestis bv. Antiqua (strain Antiqua)</name>
    <dbReference type="NCBI Taxonomy" id="360102"/>
    <lineage>
        <taxon>Bacteria</taxon>
        <taxon>Pseudomonadati</taxon>
        <taxon>Pseudomonadota</taxon>
        <taxon>Gammaproteobacteria</taxon>
        <taxon>Enterobacterales</taxon>
        <taxon>Yersiniaceae</taxon>
        <taxon>Yersinia</taxon>
    </lineage>
</organism>
<evidence type="ECO:0000255" key="1">
    <source>
        <dbReference type="HAMAP-Rule" id="MF_00508"/>
    </source>
</evidence>
<evidence type="ECO:0000305" key="2"/>
<protein>
    <recommendedName>
        <fullName evidence="1">Small ribosomal subunit protein uS10</fullName>
    </recommendedName>
    <alternativeName>
        <fullName evidence="2">30S ribosomal protein S10</fullName>
    </alternativeName>
</protein>
<name>RS10_YERPA</name>
<comment type="function">
    <text evidence="1">Involved in the binding of tRNA to the ribosomes.</text>
</comment>
<comment type="subunit">
    <text evidence="1">Part of the 30S ribosomal subunit.</text>
</comment>
<comment type="similarity">
    <text evidence="1">Belongs to the universal ribosomal protein uS10 family.</text>
</comment>
<proteinExistence type="inferred from homology"/>
<accession>Q1C2U6</accession>
<keyword id="KW-0687">Ribonucleoprotein</keyword>
<keyword id="KW-0689">Ribosomal protein</keyword>